<sequence>MLFKSLQSISSVSSVQKNQISSISVGSTQSNNNAALLDAAALVVIPGLLTAAAVAHI</sequence>
<feature type="chain" id="PRO_0000348482" description="Uncharacterized transmembrane protein DDB_G0286193">
    <location>
        <begin position="1"/>
        <end position="57"/>
    </location>
</feature>
<feature type="transmembrane region" description="Helical" evidence="1">
    <location>
        <begin position="34"/>
        <end position="54"/>
    </location>
</feature>
<proteinExistence type="predicted"/>
<organism>
    <name type="scientific">Dictyostelium discoideum</name>
    <name type="common">Social amoeba</name>
    <dbReference type="NCBI Taxonomy" id="44689"/>
    <lineage>
        <taxon>Eukaryota</taxon>
        <taxon>Amoebozoa</taxon>
        <taxon>Evosea</taxon>
        <taxon>Eumycetozoa</taxon>
        <taxon>Dictyostelia</taxon>
        <taxon>Dictyosteliales</taxon>
        <taxon>Dictyosteliaceae</taxon>
        <taxon>Dictyostelium</taxon>
    </lineage>
</organism>
<reference key="1">
    <citation type="journal article" date="2005" name="Nature">
        <title>The genome of the social amoeba Dictyostelium discoideum.</title>
        <authorList>
            <person name="Eichinger L."/>
            <person name="Pachebat J.A."/>
            <person name="Gloeckner G."/>
            <person name="Rajandream M.A."/>
            <person name="Sucgang R."/>
            <person name="Berriman M."/>
            <person name="Song J."/>
            <person name="Olsen R."/>
            <person name="Szafranski K."/>
            <person name="Xu Q."/>
            <person name="Tunggal B."/>
            <person name="Kummerfeld S."/>
            <person name="Madera M."/>
            <person name="Konfortov B.A."/>
            <person name="Rivero F."/>
            <person name="Bankier A.T."/>
            <person name="Lehmann R."/>
            <person name="Hamlin N."/>
            <person name="Davies R."/>
            <person name="Gaudet P."/>
            <person name="Fey P."/>
            <person name="Pilcher K."/>
            <person name="Chen G."/>
            <person name="Saunders D."/>
            <person name="Sodergren E.J."/>
            <person name="Davis P."/>
            <person name="Kerhornou A."/>
            <person name="Nie X."/>
            <person name="Hall N."/>
            <person name="Anjard C."/>
            <person name="Hemphill L."/>
            <person name="Bason N."/>
            <person name="Farbrother P."/>
            <person name="Desany B."/>
            <person name="Just E."/>
            <person name="Morio T."/>
            <person name="Rost R."/>
            <person name="Churcher C.M."/>
            <person name="Cooper J."/>
            <person name="Haydock S."/>
            <person name="van Driessche N."/>
            <person name="Cronin A."/>
            <person name="Goodhead I."/>
            <person name="Muzny D.M."/>
            <person name="Mourier T."/>
            <person name="Pain A."/>
            <person name="Lu M."/>
            <person name="Harper D."/>
            <person name="Lindsay R."/>
            <person name="Hauser H."/>
            <person name="James K.D."/>
            <person name="Quiles M."/>
            <person name="Madan Babu M."/>
            <person name="Saito T."/>
            <person name="Buchrieser C."/>
            <person name="Wardroper A."/>
            <person name="Felder M."/>
            <person name="Thangavelu M."/>
            <person name="Johnson D."/>
            <person name="Knights A."/>
            <person name="Loulseged H."/>
            <person name="Mungall K.L."/>
            <person name="Oliver K."/>
            <person name="Price C."/>
            <person name="Quail M.A."/>
            <person name="Urushihara H."/>
            <person name="Hernandez J."/>
            <person name="Rabbinowitsch E."/>
            <person name="Steffen D."/>
            <person name="Sanders M."/>
            <person name="Ma J."/>
            <person name="Kohara Y."/>
            <person name="Sharp S."/>
            <person name="Simmonds M.N."/>
            <person name="Spiegler S."/>
            <person name="Tivey A."/>
            <person name="Sugano S."/>
            <person name="White B."/>
            <person name="Walker D."/>
            <person name="Woodward J.R."/>
            <person name="Winckler T."/>
            <person name="Tanaka Y."/>
            <person name="Shaulsky G."/>
            <person name="Schleicher M."/>
            <person name="Weinstock G.M."/>
            <person name="Rosenthal A."/>
            <person name="Cox E.C."/>
            <person name="Chisholm R.L."/>
            <person name="Gibbs R.A."/>
            <person name="Loomis W.F."/>
            <person name="Platzer M."/>
            <person name="Kay R.R."/>
            <person name="Williams J.G."/>
            <person name="Dear P.H."/>
            <person name="Noegel A.A."/>
            <person name="Barrell B.G."/>
            <person name="Kuspa A."/>
        </authorList>
    </citation>
    <scope>NUCLEOTIDE SEQUENCE [LARGE SCALE GENOMIC DNA]</scope>
    <source>
        <strain>AX4</strain>
    </source>
</reference>
<evidence type="ECO:0000255" key="1"/>
<evidence type="ECO:0000305" key="2"/>
<comment type="subcellular location">
    <subcellularLocation>
        <location evidence="2">Membrane</location>
        <topology evidence="2">Single-pass membrane protein</topology>
    </subcellularLocation>
</comment>
<gene>
    <name type="ORF">DDB_G0286193</name>
</gene>
<name>Y0003_DICDI</name>
<dbReference type="EMBL" id="AAFI02000085">
    <property type="protein sequence ID" value="EAL64272.1"/>
    <property type="molecule type" value="Genomic_DNA"/>
</dbReference>
<dbReference type="EMBL" id="AAFI02000055">
    <property type="protein sequence ID" value="EAL65695.1"/>
    <property type="molecule type" value="Genomic_DNA"/>
</dbReference>
<dbReference type="RefSeq" id="XP_637772.1">
    <property type="nucleotide sequence ID" value="XM_632680.1"/>
</dbReference>
<dbReference type="RefSeq" id="XP_639053.1">
    <property type="nucleotide sequence ID" value="XM_633961.1"/>
</dbReference>
<dbReference type="FunCoup" id="Q54M59">
    <property type="interactions" value="640"/>
</dbReference>
<dbReference type="PaxDb" id="44689-DDB0185499"/>
<dbReference type="EnsemblProtists" id="EAL64272">
    <property type="protein sequence ID" value="EAL64272"/>
    <property type="gene ID" value="DDB_G0286193"/>
</dbReference>
<dbReference type="EnsemblProtists" id="EAL65695">
    <property type="protein sequence ID" value="EAL65695"/>
    <property type="gene ID" value="DDB_G0283421"/>
</dbReference>
<dbReference type="GeneID" id="8625486"/>
<dbReference type="KEGG" id="ddi:DDB_G0283421"/>
<dbReference type="KEGG" id="ddi:DDB_G0286193"/>
<dbReference type="dictyBase" id="DDB_G0283421"/>
<dbReference type="dictyBase" id="DDB_G0286193"/>
<dbReference type="HOGENOM" id="CLU_210588_0_0_1"/>
<dbReference type="InParanoid" id="Q54M59"/>
<dbReference type="PRO" id="PR:Q54M59"/>
<dbReference type="Proteomes" id="UP000002195">
    <property type="component" value="Chromosome 4"/>
</dbReference>
<dbReference type="GO" id="GO:0016020">
    <property type="term" value="C:membrane"/>
    <property type="evidence" value="ECO:0007669"/>
    <property type="project" value="UniProtKB-SubCell"/>
</dbReference>
<protein>
    <recommendedName>
        <fullName>Uncharacterized transmembrane protein DDB_G0286193</fullName>
    </recommendedName>
</protein>
<keyword id="KW-0472">Membrane</keyword>
<keyword id="KW-1185">Reference proteome</keyword>
<keyword id="KW-0812">Transmembrane</keyword>
<keyword id="KW-1133">Transmembrane helix</keyword>
<accession>Q54M59</accession>